<dbReference type="EC" id="3.4.22.-"/>
<dbReference type="EMBL" id="M88503">
    <property type="protein sequence ID" value="AAA29433.1"/>
    <property type="molecule type" value="Genomic_DNA"/>
</dbReference>
<dbReference type="EMBL" id="M88503">
    <property type="protein sequence ID" value="AAA29434.1"/>
    <property type="status" value="ALT_SEQ"/>
    <property type="molecule type" value="Genomic_DNA"/>
</dbReference>
<dbReference type="EMBL" id="M88504">
    <property type="protein sequence ID" value="AAA29435.1"/>
    <property type="molecule type" value="Genomic_DNA"/>
</dbReference>
<dbReference type="PIR" id="A48454">
    <property type="entry name" value="A48454"/>
</dbReference>
<dbReference type="SMR" id="P25802"/>
<dbReference type="MEROPS" id="C01.101"/>
<dbReference type="GlyCosmos" id="P25802">
    <property type="glycosylation" value="2 sites, No reported glycans"/>
</dbReference>
<dbReference type="GO" id="GO:0008234">
    <property type="term" value="F:cysteine-type peptidase activity"/>
    <property type="evidence" value="ECO:0007669"/>
    <property type="project" value="UniProtKB-KW"/>
</dbReference>
<dbReference type="GO" id="GO:0006508">
    <property type="term" value="P:proteolysis"/>
    <property type="evidence" value="ECO:0007669"/>
    <property type="project" value="UniProtKB-KW"/>
</dbReference>
<dbReference type="CDD" id="cd02620">
    <property type="entry name" value="Peptidase_C1A_CathepsinB"/>
    <property type="match status" value="1"/>
</dbReference>
<dbReference type="FunFam" id="3.90.70.10:FF:000031">
    <property type="entry name" value="Cathepsin B"/>
    <property type="match status" value="1"/>
</dbReference>
<dbReference type="Gene3D" id="3.90.70.10">
    <property type="entry name" value="Cysteine proteinases"/>
    <property type="match status" value="1"/>
</dbReference>
<dbReference type="InterPro" id="IPR038765">
    <property type="entry name" value="Papain-like_cys_pep_sf"/>
</dbReference>
<dbReference type="InterPro" id="IPR025661">
    <property type="entry name" value="Pept_asp_AS"/>
</dbReference>
<dbReference type="InterPro" id="IPR000169">
    <property type="entry name" value="Pept_cys_AS"/>
</dbReference>
<dbReference type="InterPro" id="IPR025660">
    <property type="entry name" value="Pept_his_AS"/>
</dbReference>
<dbReference type="InterPro" id="IPR013128">
    <property type="entry name" value="Peptidase_C1A"/>
</dbReference>
<dbReference type="InterPro" id="IPR000668">
    <property type="entry name" value="Peptidase_C1A_C"/>
</dbReference>
<dbReference type="PANTHER" id="PTHR12411">
    <property type="entry name" value="CYSTEINE PROTEASE FAMILY C1-RELATED"/>
    <property type="match status" value="1"/>
</dbReference>
<dbReference type="Pfam" id="PF00112">
    <property type="entry name" value="Peptidase_C1"/>
    <property type="match status" value="1"/>
</dbReference>
<dbReference type="PRINTS" id="PR00705">
    <property type="entry name" value="PAPAIN"/>
</dbReference>
<dbReference type="SMART" id="SM00645">
    <property type="entry name" value="Pept_C1"/>
    <property type="match status" value="1"/>
</dbReference>
<dbReference type="SUPFAM" id="SSF54001">
    <property type="entry name" value="Cysteine proteinases"/>
    <property type="match status" value="1"/>
</dbReference>
<dbReference type="PROSITE" id="PS00640">
    <property type="entry name" value="THIOL_PROTEASE_ASN"/>
    <property type="match status" value="1"/>
</dbReference>
<dbReference type="PROSITE" id="PS00139">
    <property type="entry name" value="THIOL_PROTEASE_CYS"/>
    <property type="match status" value="1"/>
</dbReference>
<dbReference type="PROSITE" id="PS00639">
    <property type="entry name" value="THIOL_PROTEASE_HIS"/>
    <property type="match status" value="1"/>
</dbReference>
<keyword id="KW-1015">Disulfide bond</keyword>
<keyword id="KW-0325">Glycoprotein</keyword>
<keyword id="KW-0378">Hydrolase</keyword>
<keyword id="KW-0645">Protease</keyword>
<keyword id="KW-0732">Signal</keyword>
<keyword id="KW-0788">Thiol protease</keyword>
<keyword id="KW-0865">Zymogen</keyword>
<evidence type="ECO:0000250" key="1"/>
<evidence type="ECO:0000255" key="2"/>
<evidence type="ECO:0000255" key="3">
    <source>
        <dbReference type="PROSITE-ProRule" id="PRU10088"/>
    </source>
</evidence>
<evidence type="ECO:0000255" key="4">
    <source>
        <dbReference type="PROSITE-ProRule" id="PRU10089"/>
    </source>
</evidence>
<evidence type="ECO:0000255" key="5">
    <source>
        <dbReference type="PROSITE-ProRule" id="PRU10090"/>
    </source>
</evidence>
<organism>
    <name type="scientific">Ostertagia ostertagi</name>
    <name type="common">Brown stomach worm</name>
    <name type="synonym">Strongylus ostertagi</name>
    <dbReference type="NCBI Taxonomy" id="6317"/>
    <lineage>
        <taxon>Eukaryota</taxon>
        <taxon>Metazoa</taxon>
        <taxon>Ecdysozoa</taxon>
        <taxon>Nematoda</taxon>
        <taxon>Chromadorea</taxon>
        <taxon>Rhabditida</taxon>
        <taxon>Rhabditina</taxon>
        <taxon>Rhabditomorpha</taxon>
        <taxon>Strongyloidea</taxon>
        <taxon>Trichostrongylidae</taxon>
        <taxon>Ostertagia</taxon>
    </lineage>
</organism>
<sequence>MKYLFFALCLYLYQGISEAEVPAEQIPLEAQALSGLPLVEYLQKNQRLFEVTATPVPYFKQRLMDLKYIDQNNIPDEEVEDEELEENNDDIPESYDPRIQWANCSSLFHIPDQANCGSCWAVSSAAAMSDRICIASKGAKQVLISAQDVVSCCTWCGDGCEGGWPISAFRFHADEGVVTGGDYNTKGSCRPYEIHPCGHHGNETYYGECVGMADTPRCKRRCLLGYPKSYPSDRYYKKAYQLKNSVKAIQKDIMKNGPVVATYTVYEDFAHYRSGIYKHKAGRKTGLHAVKVIGWGEEKGTPYWIVANSWHDDWGENGFFRMHRGSNDCGFEERMAAGSVQ</sequence>
<protein>
    <recommendedName>
        <fullName>Cathepsin B-like cysteine proteinase 1</fullName>
        <ecNumber>3.4.22.-</ecNumber>
    </recommendedName>
</protein>
<accession>P25802</accession>
<gene>
    <name type="primary">CP-1</name>
</gene>
<name>CYSP1_OSTOS</name>
<comment type="function">
    <text>Expression of the protease correlates with blood-feeding and suggests a role for the protease in blood digestion.</text>
</comment>
<comment type="similarity">
    <text evidence="3 4 5">Belongs to the peptidase C1 family.</text>
</comment>
<reference key="1">
    <citation type="journal article" date="1992" name="Mol. Biochem. Parasitol.">
        <title>Isolation of putative cysteine protease genes of Ostertagia ostertagi.</title>
        <authorList>
            <person name="Pratt D."/>
            <person name="Boisvenue R.J."/>
            <person name="Cox G.N."/>
        </authorList>
    </citation>
    <scope>NUCLEOTIDE SEQUENCE [GENOMIC DNA]</scope>
    <source>
        <tissue>Larva</tissue>
    </source>
</reference>
<proteinExistence type="inferred from homology"/>
<feature type="signal peptide" evidence="2">
    <location>
        <begin position="1"/>
        <end position="19"/>
    </location>
</feature>
<feature type="propeptide" id="PRO_0000026200" description="Activation peptide" evidence="2">
    <location>
        <begin position="20"/>
        <end position="88"/>
    </location>
</feature>
<feature type="chain" id="PRO_0000026201" description="Cathepsin B-like cysteine proteinase 1">
    <location>
        <begin position="89"/>
        <end position="341"/>
    </location>
</feature>
<feature type="active site" evidence="1">
    <location>
        <position position="119"/>
    </location>
</feature>
<feature type="active site" evidence="1">
    <location>
        <position position="288"/>
    </location>
</feature>
<feature type="active site" evidence="1">
    <location>
        <position position="308"/>
    </location>
</feature>
<feature type="glycosylation site" description="N-linked (GlcNAc...) asparagine" evidence="2">
    <location>
        <position position="103"/>
    </location>
</feature>
<feature type="glycosylation site" description="N-linked (GlcNAc...) asparagine" evidence="2">
    <location>
        <position position="202"/>
    </location>
</feature>
<feature type="disulfide bond" evidence="1">
    <location>
        <begin position="104"/>
        <end position="133"/>
    </location>
</feature>
<feature type="disulfide bond" evidence="1">
    <location>
        <begin position="116"/>
        <end position="160"/>
    </location>
</feature>
<feature type="disulfide bond" evidence="1">
    <location>
        <begin position="152"/>
        <end position="218"/>
    </location>
</feature>
<feature type="disulfide bond" evidence="1">
    <location>
        <begin position="153"/>
        <end position="156"/>
    </location>
</feature>
<feature type="disulfide bond" evidence="1">
    <location>
        <begin position="189"/>
        <end position="222"/>
    </location>
</feature>
<feature type="disulfide bond" evidence="1">
    <location>
        <begin position="197"/>
        <end position="209"/>
    </location>
</feature>